<protein>
    <recommendedName>
        <fullName evidence="1">Ribosomal protein L11 methyltransferase</fullName>
        <shortName evidence="1">L11 Mtase</shortName>
        <ecNumber evidence="1">2.1.1.-</ecNumber>
    </recommendedName>
</protein>
<evidence type="ECO:0000255" key="1">
    <source>
        <dbReference type="HAMAP-Rule" id="MF_00735"/>
    </source>
</evidence>
<sequence length="303" mass="33058">MKWIHVNARFEADDMALAEELVAQIFFDLDLKGVVCEVPLPEPDEGFGSNALAQPDTHSISGYLPDLSTSDLLFADIKKKADALKGINVTLSTRIVDDQDWAESWKDFFFVTRITDTLVIRPSWREFEPKPGDVVIDLDPGMAFGTGTHETTAMCLALVQEQITPGASFLDVGTGSGILMIAAAKLGAGTLKGLDNDEAAVQIAGKNLEHNRISPQSFEIRCTTLDRYPHEKFDLVVANILAEVIISILPEIHSRLAPGGRAILSGIIIAWEERVKTALEDNGFTLVKTTTQGEWVALVAELV</sequence>
<organism>
    <name type="scientific">Desulforapulum autotrophicum (strain ATCC 43914 / DSM 3382 / VKM B-1955 / HRM2)</name>
    <name type="common">Desulfobacterium autotrophicum</name>
    <dbReference type="NCBI Taxonomy" id="177437"/>
    <lineage>
        <taxon>Bacteria</taxon>
        <taxon>Pseudomonadati</taxon>
        <taxon>Thermodesulfobacteriota</taxon>
        <taxon>Desulfobacteria</taxon>
        <taxon>Desulfobacterales</taxon>
        <taxon>Desulfobacteraceae</taxon>
        <taxon>Desulforapulum</taxon>
    </lineage>
</organism>
<proteinExistence type="inferred from homology"/>
<name>PRMA_DESAH</name>
<feature type="chain" id="PRO_1000212745" description="Ribosomal protein L11 methyltransferase">
    <location>
        <begin position="1"/>
        <end position="303"/>
    </location>
</feature>
<feature type="binding site" evidence="1">
    <location>
        <position position="152"/>
    </location>
    <ligand>
        <name>S-adenosyl-L-methionine</name>
        <dbReference type="ChEBI" id="CHEBI:59789"/>
    </ligand>
</feature>
<feature type="binding site" evidence="1">
    <location>
        <position position="173"/>
    </location>
    <ligand>
        <name>S-adenosyl-L-methionine</name>
        <dbReference type="ChEBI" id="CHEBI:59789"/>
    </ligand>
</feature>
<feature type="binding site" evidence="1">
    <location>
        <position position="195"/>
    </location>
    <ligand>
        <name>S-adenosyl-L-methionine</name>
        <dbReference type="ChEBI" id="CHEBI:59789"/>
    </ligand>
</feature>
<feature type="binding site" evidence="1">
    <location>
        <position position="239"/>
    </location>
    <ligand>
        <name>S-adenosyl-L-methionine</name>
        <dbReference type="ChEBI" id="CHEBI:59789"/>
    </ligand>
</feature>
<gene>
    <name evidence="1" type="primary">prmA</name>
    <name type="ordered locus">HRM2_11510</name>
</gene>
<reference key="1">
    <citation type="journal article" date="2009" name="Environ. Microbiol.">
        <title>Genome sequence of Desulfobacterium autotrophicum HRM2, a marine sulfate reducer oxidizing organic carbon completely to carbon dioxide.</title>
        <authorList>
            <person name="Strittmatter A.W."/>
            <person name="Liesegang H."/>
            <person name="Rabus R."/>
            <person name="Decker I."/>
            <person name="Amann J."/>
            <person name="Andres S."/>
            <person name="Henne A."/>
            <person name="Fricke W.F."/>
            <person name="Martinez-Arias R."/>
            <person name="Bartels D."/>
            <person name="Goesmann A."/>
            <person name="Krause L."/>
            <person name="Puehler A."/>
            <person name="Klenk H.P."/>
            <person name="Richter M."/>
            <person name="Schuler M."/>
            <person name="Gloeckner F.O."/>
            <person name="Meyerdierks A."/>
            <person name="Gottschalk G."/>
            <person name="Amann R."/>
        </authorList>
    </citation>
    <scope>NUCLEOTIDE SEQUENCE [LARGE SCALE GENOMIC DNA]</scope>
    <source>
        <strain>ATCC 43914 / DSM 3382 / VKM B-1955 / HRM2</strain>
    </source>
</reference>
<comment type="function">
    <text evidence="1">Methylates ribosomal protein L11.</text>
</comment>
<comment type="catalytic activity">
    <reaction evidence="1">
        <text>L-lysyl-[protein] + 3 S-adenosyl-L-methionine = N(6),N(6),N(6)-trimethyl-L-lysyl-[protein] + 3 S-adenosyl-L-homocysteine + 3 H(+)</text>
        <dbReference type="Rhea" id="RHEA:54192"/>
        <dbReference type="Rhea" id="RHEA-COMP:9752"/>
        <dbReference type="Rhea" id="RHEA-COMP:13826"/>
        <dbReference type="ChEBI" id="CHEBI:15378"/>
        <dbReference type="ChEBI" id="CHEBI:29969"/>
        <dbReference type="ChEBI" id="CHEBI:57856"/>
        <dbReference type="ChEBI" id="CHEBI:59789"/>
        <dbReference type="ChEBI" id="CHEBI:61961"/>
    </reaction>
</comment>
<comment type="subcellular location">
    <subcellularLocation>
        <location evidence="1">Cytoplasm</location>
    </subcellularLocation>
</comment>
<comment type="similarity">
    <text evidence="1">Belongs to the methyltransferase superfamily. PrmA family.</text>
</comment>
<keyword id="KW-0963">Cytoplasm</keyword>
<keyword id="KW-0489">Methyltransferase</keyword>
<keyword id="KW-1185">Reference proteome</keyword>
<keyword id="KW-0949">S-adenosyl-L-methionine</keyword>
<keyword id="KW-0808">Transferase</keyword>
<dbReference type="EC" id="2.1.1.-" evidence="1"/>
<dbReference type="EMBL" id="CP001087">
    <property type="protein sequence ID" value="ACN14263.1"/>
    <property type="molecule type" value="Genomic_DNA"/>
</dbReference>
<dbReference type="RefSeq" id="WP_015903052.1">
    <property type="nucleotide sequence ID" value="NC_012108.1"/>
</dbReference>
<dbReference type="SMR" id="C0QLV7"/>
<dbReference type="STRING" id="177437.HRM2_11510"/>
<dbReference type="KEGG" id="dat:HRM2_11510"/>
<dbReference type="eggNOG" id="COG2264">
    <property type="taxonomic scope" value="Bacteria"/>
</dbReference>
<dbReference type="HOGENOM" id="CLU_049382_0_1_7"/>
<dbReference type="OrthoDB" id="9785995at2"/>
<dbReference type="Proteomes" id="UP000000442">
    <property type="component" value="Chromosome"/>
</dbReference>
<dbReference type="GO" id="GO:0005737">
    <property type="term" value="C:cytoplasm"/>
    <property type="evidence" value="ECO:0007669"/>
    <property type="project" value="UniProtKB-SubCell"/>
</dbReference>
<dbReference type="GO" id="GO:0016279">
    <property type="term" value="F:protein-lysine N-methyltransferase activity"/>
    <property type="evidence" value="ECO:0007669"/>
    <property type="project" value="RHEA"/>
</dbReference>
<dbReference type="GO" id="GO:0032259">
    <property type="term" value="P:methylation"/>
    <property type="evidence" value="ECO:0007669"/>
    <property type="project" value="UniProtKB-KW"/>
</dbReference>
<dbReference type="CDD" id="cd02440">
    <property type="entry name" value="AdoMet_MTases"/>
    <property type="match status" value="1"/>
</dbReference>
<dbReference type="Gene3D" id="3.40.50.150">
    <property type="entry name" value="Vaccinia Virus protein VP39"/>
    <property type="match status" value="1"/>
</dbReference>
<dbReference type="HAMAP" id="MF_00735">
    <property type="entry name" value="Methyltr_PrmA"/>
    <property type="match status" value="1"/>
</dbReference>
<dbReference type="InterPro" id="IPR050078">
    <property type="entry name" value="Ribosomal_L11_MeTrfase_PrmA"/>
</dbReference>
<dbReference type="InterPro" id="IPR004498">
    <property type="entry name" value="Ribosomal_PrmA_MeTrfase"/>
</dbReference>
<dbReference type="InterPro" id="IPR029063">
    <property type="entry name" value="SAM-dependent_MTases_sf"/>
</dbReference>
<dbReference type="NCBIfam" id="TIGR00406">
    <property type="entry name" value="prmA"/>
    <property type="match status" value="1"/>
</dbReference>
<dbReference type="PANTHER" id="PTHR43648">
    <property type="entry name" value="ELECTRON TRANSFER FLAVOPROTEIN BETA SUBUNIT LYSINE METHYLTRANSFERASE"/>
    <property type="match status" value="1"/>
</dbReference>
<dbReference type="PANTHER" id="PTHR43648:SF1">
    <property type="entry name" value="ELECTRON TRANSFER FLAVOPROTEIN BETA SUBUNIT LYSINE METHYLTRANSFERASE"/>
    <property type="match status" value="1"/>
</dbReference>
<dbReference type="Pfam" id="PF06325">
    <property type="entry name" value="PrmA"/>
    <property type="match status" value="1"/>
</dbReference>
<dbReference type="PIRSF" id="PIRSF000401">
    <property type="entry name" value="RPL11_MTase"/>
    <property type="match status" value="1"/>
</dbReference>
<dbReference type="SUPFAM" id="SSF53335">
    <property type="entry name" value="S-adenosyl-L-methionine-dependent methyltransferases"/>
    <property type="match status" value="1"/>
</dbReference>
<accession>C0QLV7</accession>